<feature type="chain" id="PRO_0000227106" description="Glycine dehydrogenase (decarboxylating)">
    <location>
        <begin position="1"/>
        <end position="962"/>
    </location>
</feature>
<feature type="modified residue" description="N6-(pyridoxal phosphate)lysine" evidence="1">
    <location>
        <position position="710"/>
    </location>
</feature>
<keyword id="KW-0560">Oxidoreductase</keyword>
<keyword id="KW-0663">Pyridoxal phosphate</keyword>
<keyword id="KW-1185">Reference proteome</keyword>
<dbReference type="EC" id="1.4.4.2" evidence="1"/>
<dbReference type="EMBL" id="AE017340">
    <property type="protein sequence ID" value="AAV82924.1"/>
    <property type="molecule type" value="Genomic_DNA"/>
</dbReference>
<dbReference type="RefSeq" id="WP_011235320.1">
    <property type="nucleotide sequence ID" value="NC_006512.1"/>
</dbReference>
<dbReference type="SMR" id="Q5R192"/>
<dbReference type="STRING" id="283942.IL2092"/>
<dbReference type="GeneID" id="41337281"/>
<dbReference type="KEGG" id="ilo:IL2092"/>
<dbReference type="eggNOG" id="COG0403">
    <property type="taxonomic scope" value="Bacteria"/>
</dbReference>
<dbReference type="eggNOG" id="COG1003">
    <property type="taxonomic scope" value="Bacteria"/>
</dbReference>
<dbReference type="HOGENOM" id="CLU_004620_3_2_6"/>
<dbReference type="OrthoDB" id="9801272at2"/>
<dbReference type="Proteomes" id="UP000001171">
    <property type="component" value="Chromosome"/>
</dbReference>
<dbReference type="GO" id="GO:0005829">
    <property type="term" value="C:cytosol"/>
    <property type="evidence" value="ECO:0007669"/>
    <property type="project" value="TreeGrafter"/>
</dbReference>
<dbReference type="GO" id="GO:0005960">
    <property type="term" value="C:glycine cleavage complex"/>
    <property type="evidence" value="ECO:0007669"/>
    <property type="project" value="TreeGrafter"/>
</dbReference>
<dbReference type="GO" id="GO:0016594">
    <property type="term" value="F:glycine binding"/>
    <property type="evidence" value="ECO:0007669"/>
    <property type="project" value="TreeGrafter"/>
</dbReference>
<dbReference type="GO" id="GO:0004375">
    <property type="term" value="F:glycine dehydrogenase (decarboxylating) activity"/>
    <property type="evidence" value="ECO:0007669"/>
    <property type="project" value="UniProtKB-EC"/>
</dbReference>
<dbReference type="GO" id="GO:0030170">
    <property type="term" value="F:pyridoxal phosphate binding"/>
    <property type="evidence" value="ECO:0007669"/>
    <property type="project" value="TreeGrafter"/>
</dbReference>
<dbReference type="GO" id="GO:0019464">
    <property type="term" value="P:glycine decarboxylation via glycine cleavage system"/>
    <property type="evidence" value="ECO:0007669"/>
    <property type="project" value="UniProtKB-UniRule"/>
</dbReference>
<dbReference type="CDD" id="cd00613">
    <property type="entry name" value="GDC-P"/>
    <property type="match status" value="2"/>
</dbReference>
<dbReference type="FunFam" id="3.40.640.10:FF:000005">
    <property type="entry name" value="Glycine dehydrogenase (decarboxylating), mitochondrial"/>
    <property type="match status" value="1"/>
</dbReference>
<dbReference type="FunFam" id="3.90.1150.10:FF:000007">
    <property type="entry name" value="Glycine dehydrogenase (decarboxylating), mitochondrial"/>
    <property type="match status" value="1"/>
</dbReference>
<dbReference type="FunFam" id="3.40.640.10:FF:000007">
    <property type="entry name" value="glycine dehydrogenase (Decarboxylating), mitochondrial"/>
    <property type="match status" value="1"/>
</dbReference>
<dbReference type="Gene3D" id="3.90.1150.10">
    <property type="entry name" value="Aspartate Aminotransferase, domain 1"/>
    <property type="match status" value="2"/>
</dbReference>
<dbReference type="Gene3D" id="3.40.640.10">
    <property type="entry name" value="Type I PLP-dependent aspartate aminotransferase-like (Major domain)"/>
    <property type="match status" value="2"/>
</dbReference>
<dbReference type="HAMAP" id="MF_00711">
    <property type="entry name" value="GcvP"/>
    <property type="match status" value="1"/>
</dbReference>
<dbReference type="InterPro" id="IPR003437">
    <property type="entry name" value="GcvP"/>
</dbReference>
<dbReference type="InterPro" id="IPR049316">
    <property type="entry name" value="GDC-P_C"/>
</dbReference>
<dbReference type="InterPro" id="IPR049315">
    <property type="entry name" value="GDC-P_N"/>
</dbReference>
<dbReference type="InterPro" id="IPR020581">
    <property type="entry name" value="GDC_P"/>
</dbReference>
<dbReference type="InterPro" id="IPR015424">
    <property type="entry name" value="PyrdxlP-dep_Trfase"/>
</dbReference>
<dbReference type="InterPro" id="IPR015421">
    <property type="entry name" value="PyrdxlP-dep_Trfase_major"/>
</dbReference>
<dbReference type="InterPro" id="IPR015422">
    <property type="entry name" value="PyrdxlP-dep_Trfase_small"/>
</dbReference>
<dbReference type="NCBIfam" id="TIGR00461">
    <property type="entry name" value="gcvP"/>
    <property type="match status" value="1"/>
</dbReference>
<dbReference type="NCBIfam" id="NF003346">
    <property type="entry name" value="PRK04366.1"/>
    <property type="match status" value="1"/>
</dbReference>
<dbReference type="PANTHER" id="PTHR11773:SF13">
    <property type="entry name" value="GLYCINE DEHYDROGENASE (DECARBOXYLATING)"/>
    <property type="match status" value="1"/>
</dbReference>
<dbReference type="PANTHER" id="PTHR11773">
    <property type="entry name" value="GLYCINE DEHYDROGENASE, DECARBOXYLATING"/>
    <property type="match status" value="1"/>
</dbReference>
<dbReference type="Pfam" id="PF21478">
    <property type="entry name" value="GcvP2_C"/>
    <property type="match status" value="1"/>
</dbReference>
<dbReference type="Pfam" id="PF02347">
    <property type="entry name" value="GDC-P"/>
    <property type="match status" value="2"/>
</dbReference>
<dbReference type="SUPFAM" id="SSF53383">
    <property type="entry name" value="PLP-dependent transferases"/>
    <property type="match status" value="2"/>
</dbReference>
<evidence type="ECO:0000255" key="1">
    <source>
        <dbReference type="HAMAP-Rule" id="MF_00711"/>
    </source>
</evidence>
<protein>
    <recommendedName>
        <fullName evidence="1">Glycine dehydrogenase (decarboxylating)</fullName>
        <ecNumber evidence="1">1.4.4.2</ecNumber>
    </recommendedName>
    <alternativeName>
        <fullName evidence="1">Glycine cleavage system P-protein</fullName>
    </alternativeName>
    <alternativeName>
        <fullName evidence="1">Glycine decarboxylase</fullName>
    </alternativeName>
    <alternativeName>
        <fullName evidence="1">Glycine dehydrogenase (aminomethyl-transferring)</fullName>
    </alternativeName>
</protein>
<reference key="1">
    <citation type="journal article" date="2004" name="Proc. Natl. Acad. Sci. U.S.A.">
        <title>Genome sequence of the deep-sea gamma-proteobacterium Idiomarina loihiensis reveals amino acid fermentation as a source of carbon and energy.</title>
        <authorList>
            <person name="Hou S."/>
            <person name="Saw J.H."/>
            <person name="Lee K.S."/>
            <person name="Freitas T.A."/>
            <person name="Belisle C."/>
            <person name="Kawarabayasi Y."/>
            <person name="Donachie S.P."/>
            <person name="Pikina A."/>
            <person name="Galperin M.Y."/>
            <person name="Koonin E.V."/>
            <person name="Makarova K.S."/>
            <person name="Omelchenko M.V."/>
            <person name="Sorokin A."/>
            <person name="Wolf Y.I."/>
            <person name="Li Q.X."/>
            <person name="Keum Y.S."/>
            <person name="Campbell S."/>
            <person name="Denery J."/>
            <person name="Aizawa S."/>
            <person name="Shibata S."/>
            <person name="Malahoff A."/>
            <person name="Alam M."/>
        </authorList>
    </citation>
    <scope>NUCLEOTIDE SEQUENCE [LARGE SCALE GENOMIC DNA]</scope>
    <source>
        <strain>ATCC BAA-735 / DSM 15497 / L2-TR</strain>
    </source>
</reference>
<name>GCSP_IDILO</name>
<gene>
    <name evidence="1" type="primary">gcvP</name>
    <name type="ordered locus">IL2092</name>
</gene>
<proteinExistence type="inferred from homology"/>
<accession>Q5R192</accession>
<comment type="function">
    <text evidence="1">The glycine cleavage system catalyzes the degradation of glycine. The P protein binds the alpha-amino group of glycine through its pyridoxal phosphate cofactor; CO(2) is released and the remaining methylamine moiety is then transferred to the lipoamide cofactor of the H protein.</text>
</comment>
<comment type="catalytic activity">
    <reaction evidence="1">
        <text>N(6)-[(R)-lipoyl]-L-lysyl-[glycine-cleavage complex H protein] + glycine + H(+) = N(6)-[(R)-S(8)-aminomethyldihydrolipoyl]-L-lysyl-[glycine-cleavage complex H protein] + CO2</text>
        <dbReference type="Rhea" id="RHEA:24304"/>
        <dbReference type="Rhea" id="RHEA-COMP:10494"/>
        <dbReference type="Rhea" id="RHEA-COMP:10495"/>
        <dbReference type="ChEBI" id="CHEBI:15378"/>
        <dbReference type="ChEBI" id="CHEBI:16526"/>
        <dbReference type="ChEBI" id="CHEBI:57305"/>
        <dbReference type="ChEBI" id="CHEBI:83099"/>
        <dbReference type="ChEBI" id="CHEBI:83143"/>
        <dbReference type="EC" id="1.4.4.2"/>
    </reaction>
</comment>
<comment type="cofactor">
    <cofactor evidence="1">
        <name>pyridoxal 5'-phosphate</name>
        <dbReference type="ChEBI" id="CHEBI:597326"/>
    </cofactor>
</comment>
<comment type="subunit">
    <text evidence="1">The glycine cleavage system is composed of four proteins: P, T, L and H.</text>
</comment>
<comment type="similarity">
    <text evidence="1">Belongs to the GcvP family.</text>
</comment>
<sequence>MSSTTLTQLEHHDEFISRHIGPSADEQKAMLAELGVDSLEALTKDTVPGAILREPFLQTGEPQTEREALARLKNIAKKNQICTSYIGMGYYDTVVPNVILRNVLENPGWYTAYTPYQPEIAQGRLEALLNFQQMTMDLTGLDLASASLLDEATAAAEAMAMAKRVSKNKKSNAFFIADNVYTQTIDVVKTRAEYFGFDIIVGPAREASDHDVFGALLQYPDKQGQLHNIEQLIGELQEKKAIVAVASDLMSLLMVKSPGEMGADMVFGNAQRFGVPMGYGGPHAAFFATRDKFKRSLPGRIIGVSKDSRGRPALRMAMQTREQHIRREKANSNICTAQVLLANMASFYAVYHGPDGLRRIANRIHRLTDIVALGMQDKGVKLVNSHWFDTLTFEMKENAADVLARSKALGLNLRVDGEGMFGISLDEAKTRDDVESLFAALFGDNHGLDIDVLDSRVAGGDVESIPADLVRQSQYLQHPVFNEYHSETEMLRYIKKLENKDLALNHSMISLGSCTMKLNATAEMIPVTWPEFGQLHPFCPAEQAQGYYELVSTLSEWLIDVTGYDAMSMQPNSGAQGEYAGLLAIQKYHESRGDGHRNICLIPSSAHGTNPASAQMMNMKVVVVDCDKHGNVDMDDLKAKAEEAGENLSCIMVTYPSTHGVYEEGIKDICDLVHNYGGQVYMDGANMNAQVGVTSPGYIGSDVSHLNLHKTFCIPHGGGGPGMGPIGVKQHLAEFLPNHSIVNIDGPKAGNGAVSAAQFGSASILTISWMYIAMMGGRGLREASETAILNANYLAEKLSKHFKILYRGRNNRVAHECIIDLRPMKDAAGIAEIDVAKRLQDYGFHSPTMSFPVAGTIMVEPTESESKAELDRFIEALVSIKAEAEKVAAGEWPKDNNPLVNAPHTLADITDAEWDRPYDRKTATYPVEAVGYDKFWPTVNRIDDVFGDRNLMCSCPSIEEYR</sequence>
<organism>
    <name type="scientific">Idiomarina loihiensis (strain ATCC BAA-735 / DSM 15497 / L2-TR)</name>
    <dbReference type="NCBI Taxonomy" id="283942"/>
    <lineage>
        <taxon>Bacteria</taxon>
        <taxon>Pseudomonadati</taxon>
        <taxon>Pseudomonadota</taxon>
        <taxon>Gammaproteobacteria</taxon>
        <taxon>Alteromonadales</taxon>
        <taxon>Idiomarinaceae</taxon>
        <taxon>Idiomarina</taxon>
    </lineage>
</organism>